<accession>P0A1V7</accession>
<accession>P15849</accession>
<gene>
    <name evidence="2" type="primary">prs</name>
    <name type="synonym">prsA</name>
    <name type="ordered locus">STY1906</name>
    <name type="ordered locus">t1096</name>
</gene>
<proteinExistence type="inferred from homology"/>
<feature type="initiator methionine" description="Removed" evidence="1">
    <location>
        <position position="1"/>
    </location>
</feature>
<feature type="chain" id="PRO_0000141183" description="Ribose-phosphate pyrophosphokinase">
    <location>
        <begin position="2"/>
        <end position="315"/>
    </location>
</feature>
<feature type="active site" evidence="2">
    <location>
        <position position="194"/>
    </location>
</feature>
<feature type="binding site" evidence="2">
    <location>
        <begin position="37"/>
        <end position="39"/>
    </location>
    <ligand>
        <name>ATP</name>
        <dbReference type="ChEBI" id="CHEBI:30616"/>
    </ligand>
</feature>
<feature type="binding site" evidence="2">
    <location>
        <begin position="96"/>
        <end position="97"/>
    </location>
    <ligand>
        <name>ATP</name>
        <dbReference type="ChEBI" id="CHEBI:30616"/>
    </ligand>
</feature>
<feature type="binding site" evidence="2">
    <location>
        <position position="131"/>
    </location>
    <ligand>
        <name>Mg(2+)</name>
        <dbReference type="ChEBI" id="CHEBI:18420"/>
        <label>1</label>
    </ligand>
</feature>
<feature type="binding site" evidence="2">
    <location>
        <position position="170"/>
    </location>
    <ligand>
        <name>Mg(2+)</name>
        <dbReference type="ChEBI" id="CHEBI:18420"/>
        <label>2</label>
    </ligand>
</feature>
<feature type="binding site" evidence="2">
    <location>
        <position position="196"/>
    </location>
    <ligand>
        <name>D-ribose 5-phosphate</name>
        <dbReference type="ChEBI" id="CHEBI:78346"/>
    </ligand>
</feature>
<feature type="binding site" evidence="2">
    <location>
        <position position="220"/>
    </location>
    <ligand>
        <name>D-ribose 5-phosphate</name>
        <dbReference type="ChEBI" id="CHEBI:78346"/>
    </ligand>
</feature>
<feature type="binding site" evidence="2">
    <location>
        <begin position="224"/>
        <end position="228"/>
    </location>
    <ligand>
        <name>D-ribose 5-phosphate</name>
        <dbReference type="ChEBI" id="CHEBI:78346"/>
    </ligand>
</feature>
<sequence length="315" mass="34216">MPDMKLFAGNATPELAQRIANRLYTSLGDAAVGRFSDGEVSVQINENVRGGDIFIIQSTCAPTNDNLMELVVMVDALRRASAGRITAVIPYFGYARQDRRVRSARVPITAKVVADFLSSVGVDRVLTVDLHAEQIQGFFDVPVDNVFGSPILLEDMLQLNLDNPIVVSPDIGGVVRARAIAKLLNDTDMAIIDKRRPRANVSQVMHIIGDVAGRDCVLVDDMIDTGGTLCKAAEALKERGAKRVFAYATHPIFSGNAANNLRNSVIDEVVVCDTIPLTDEIKALPNVRTLTLSGMLAEAIRRISNEESISAMFEH</sequence>
<organism>
    <name type="scientific">Salmonella typhi</name>
    <dbReference type="NCBI Taxonomy" id="90370"/>
    <lineage>
        <taxon>Bacteria</taxon>
        <taxon>Pseudomonadati</taxon>
        <taxon>Pseudomonadota</taxon>
        <taxon>Gammaproteobacteria</taxon>
        <taxon>Enterobacterales</taxon>
        <taxon>Enterobacteriaceae</taxon>
        <taxon>Salmonella</taxon>
    </lineage>
</organism>
<protein>
    <recommendedName>
        <fullName evidence="2">Ribose-phosphate pyrophosphokinase</fullName>
        <shortName evidence="2">RPPK</shortName>
        <ecNumber evidence="2">2.7.6.1</ecNumber>
    </recommendedName>
    <alternativeName>
        <fullName evidence="2">5-phospho-D-ribosyl alpha-1-diphosphate synthase</fullName>
    </alternativeName>
    <alternativeName>
        <fullName evidence="2">Phosphoribosyl diphosphate synthase</fullName>
    </alternativeName>
    <alternativeName>
        <fullName evidence="2">Phosphoribosyl pyrophosphate synthase</fullName>
        <shortName evidence="2">P-Rib-PP synthase</shortName>
        <shortName evidence="2">PRPP synthase</shortName>
        <shortName evidence="2">PRPPase</shortName>
    </alternativeName>
</protein>
<name>KPRS_SALTI</name>
<evidence type="ECO:0000250" key="1">
    <source>
        <dbReference type="UniProtKB" id="P0A717"/>
    </source>
</evidence>
<evidence type="ECO:0000255" key="2">
    <source>
        <dbReference type="HAMAP-Rule" id="MF_00583"/>
    </source>
</evidence>
<dbReference type="EC" id="2.7.6.1" evidence="2"/>
<dbReference type="EMBL" id="AL513382">
    <property type="protein sequence ID" value="CAD02135.1"/>
    <property type="molecule type" value="Genomic_DNA"/>
</dbReference>
<dbReference type="EMBL" id="AE014613">
    <property type="protein sequence ID" value="AAO68759.1"/>
    <property type="molecule type" value="Genomic_DNA"/>
</dbReference>
<dbReference type="RefSeq" id="NP_456290.1">
    <property type="nucleotide sequence ID" value="NC_003198.1"/>
</dbReference>
<dbReference type="RefSeq" id="WP_001518537.1">
    <property type="nucleotide sequence ID" value="NZ_WSUR01000004.1"/>
</dbReference>
<dbReference type="SMR" id="P0A1V7"/>
<dbReference type="STRING" id="220341.gene:17585829"/>
<dbReference type="GeneID" id="93033289"/>
<dbReference type="KEGG" id="stt:t1096"/>
<dbReference type="KEGG" id="sty:STY1906"/>
<dbReference type="PATRIC" id="fig|220341.7.peg.1921"/>
<dbReference type="eggNOG" id="COG0462">
    <property type="taxonomic scope" value="Bacteria"/>
</dbReference>
<dbReference type="HOGENOM" id="CLU_033546_2_0_6"/>
<dbReference type="OMA" id="YFGWARQ"/>
<dbReference type="OrthoDB" id="9777067at2"/>
<dbReference type="UniPathway" id="UPA00087">
    <property type="reaction ID" value="UER00172"/>
</dbReference>
<dbReference type="Proteomes" id="UP000000541">
    <property type="component" value="Chromosome"/>
</dbReference>
<dbReference type="Proteomes" id="UP000002670">
    <property type="component" value="Chromosome"/>
</dbReference>
<dbReference type="GO" id="GO:0005737">
    <property type="term" value="C:cytoplasm"/>
    <property type="evidence" value="ECO:0007669"/>
    <property type="project" value="UniProtKB-SubCell"/>
</dbReference>
<dbReference type="GO" id="GO:0002189">
    <property type="term" value="C:ribose phosphate diphosphokinase complex"/>
    <property type="evidence" value="ECO:0007669"/>
    <property type="project" value="TreeGrafter"/>
</dbReference>
<dbReference type="GO" id="GO:0005524">
    <property type="term" value="F:ATP binding"/>
    <property type="evidence" value="ECO:0007669"/>
    <property type="project" value="UniProtKB-KW"/>
</dbReference>
<dbReference type="GO" id="GO:0016301">
    <property type="term" value="F:kinase activity"/>
    <property type="evidence" value="ECO:0007669"/>
    <property type="project" value="UniProtKB-KW"/>
</dbReference>
<dbReference type="GO" id="GO:0000287">
    <property type="term" value="F:magnesium ion binding"/>
    <property type="evidence" value="ECO:0007669"/>
    <property type="project" value="UniProtKB-UniRule"/>
</dbReference>
<dbReference type="GO" id="GO:0004749">
    <property type="term" value="F:ribose phosphate diphosphokinase activity"/>
    <property type="evidence" value="ECO:0007669"/>
    <property type="project" value="UniProtKB-UniRule"/>
</dbReference>
<dbReference type="GO" id="GO:0006015">
    <property type="term" value="P:5-phosphoribose 1-diphosphate biosynthetic process"/>
    <property type="evidence" value="ECO:0007669"/>
    <property type="project" value="UniProtKB-UniRule"/>
</dbReference>
<dbReference type="GO" id="GO:0006164">
    <property type="term" value="P:purine nucleotide biosynthetic process"/>
    <property type="evidence" value="ECO:0007669"/>
    <property type="project" value="TreeGrafter"/>
</dbReference>
<dbReference type="GO" id="GO:0009156">
    <property type="term" value="P:ribonucleoside monophosphate biosynthetic process"/>
    <property type="evidence" value="ECO:0007669"/>
    <property type="project" value="InterPro"/>
</dbReference>
<dbReference type="CDD" id="cd06223">
    <property type="entry name" value="PRTases_typeI"/>
    <property type="match status" value="1"/>
</dbReference>
<dbReference type="FunFam" id="3.40.50.2020:FF:000001">
    <property type="entry name" value="Ribose-phosphate pyrophosphokinase"/>
    <property type="match status" value="1"/>
</dbReference>
<dbReference type="FunFam" id="3.40.50.2020:FF:000005">
    <property type="entry name" value="Ribose-phosphate pyrophosphokinase 1"/>
    <property type="match status" value="1"/>
</dbReference>
<dbReference type="Gene3D" id="3.40.50.2020">
    <property type="match status" value="2"/>
</dbReference>
<dbReference type="HAMAP" id="MF_00583_B">
    <property type="entry name" value="RibP_PPkinase_B"/>
    <property type="match status" value="1"/>
</dbReference>
<dbReference type="InterPro" id="IPR000842">
    <property type="entry name" value="PRib_PP_synth_CS"/>
</dbReference>
<dbReference type="InterPro" id="IPR029099">
    <property type="entry name" value="Pribosyltran_N"/>
</dbReference>
<dbReference type="InterPro" id="IPR000836">
    <property type="entry name" value="PRibTrfase_dom"/>
</dbReference>
<dbReference type="InterPro" id="IPR029057">
    <property type="entry name" value="PRTase-like"/>
</dbReference>
<dbReference type="InterPro" id="IPR005946">
    <property type="entry name" value="Rib-P_diPkinase"/>
</dbReference>
<dbReference type="InterPro" id="IPR037515">
    <property type="entry name" value="Rib-P_diPkinase_bac"/>
</dbReference>
<dbReference type="NCBIfam" id="NF002320">
    <property type="entry name" value="PRK01259.1"/>
    <property type="match status" value="1"/>
</dbReference>
<dbReference type="NCBIfam" id="TIGR01251">
    <property type="entry name" value="ribP_PPkin"/>
    <property type="match status" value="1"/>
</dbReference>
<dbReference type="PANTHER" id="PTHR10210">
    <property type="entry name" value="RIBOSE-PHOSPHATE DIPHOSPHOKINASE FAMILY MEMBER"/>
    <property type="match status" value="1"/>
</dbReference>
<dbReference type="PANTHER" id="PTHR10210:SF41">
    <property type="entry name" value="RIBOSE-PHOSPHATE PYROPHOSPHOKINASE 1, CHLOROPLASTIC"/>
    <property type="match status" value="1"/>
</dbReference>
<dbReference type="Pfam" id="PF14572">
    <property type="entry name" value="Pribosyl_synth"/>
    <property type="match status" value="1"/>
</dbReference>
<dbReference type="Pfam" id="PF13793">
    <property type="entry name" value="Pribosyltran_N"/>
    <property type="match status" value="1"/>
</dbReference>
<dbReference type="SMART" id="SM01400">
    <property type="entry name" value="Pribosyltran_N"/>
    <property type="match status" value="1"/>
</dbReference>
<dbReference type="SUPFAM" id="SSF53271">
    <property type="entry name" value="PRTase-like"/>
    <property type="match status" value="1"/>
</dbReference>
<dbReference type="PROSITE" id="PS00114">
    <property type="entry name" value="PRPP_SYNTHASE"/>
    <property type="match status" value="1"/>
</dbReference>
<reference key="1">
    <citation type="journal article" date="2001" name="Nature">
        <title>Complete genome sequence of a multiple drug resistant Salmonella enterica serovar Typhi CT18.</title>
        <authorList>
            <person name="Parkhill J."/>
            <person name="Dougan G."/>
            <person name="James K.D."/>
            <person name="Thomson N.R."/>
            <person name="Pickard D."/>
            <person name="Wain J."/>
            <person name="Churcher C.M."/>
            <person name="Mungall K.L."/>
            <person name="Bentley S.D."/>
            <person name="Holden M.T.G."/>
            <person name="Sebaihia M."/>
            <person name="Baker S."/>
            <person name="Basham D."/>
            <person name="Brooks K."/>
            <person name="Chillingworth T."/>
            <person name="Connerton P."/>
            <person name="Cronin A."/>
            <person name="Davis P."/>
            <person name="Davies R.M."/>
            <person name="Dowd L."/>
            <person name="White N."/>
            <person name="Farrar J."/>
            <person name="Feltwell T."/>
            <person name="Hamlin N."/>
            <person name="Haque A."/>
            <person name="Hien T.T."/>
            <person name="Holroyd S."/>
            <person name="Jagels K."/>
            <person name="Krogh A."/>
            <person name="Larsen T.S."/>
            <person name="Leather S."/>
            <person name="Moule S."/>
            <person name="O'Gaora P."/>
            <person name="Parry C."/>
            <person name="Quail M.A."/>
            <person name="Rutherford K.M."/>
            <person name="Simmonds M."/>
            <person name="Skelton J."/>
            <person name="Stevens K."/>
            <person name="Whitehead S."/>
            <person name="Barrell B.G."/>
        </authorList>
    </citation>
    <scope>NUCLEOTIDE SEQUENCE [LARGE SCALE GENOMIC DNA]</scope>
    <source>
        <strain>CT18</strain>
    </source>
</reference>
<reference key="2">
    <citation type="journal article" date="2003" name="J. Bacteriol.">
        <title>Comparative genomics of Salmonella enterica serovar Typhi strains Ty2 and CT18.</title>
        <authorList>
            <person name="Deng W."/>
            <person name="Liou S.-R."/>
            <person name="Plunkett G. III"/>
            <person name="Mayhew G.F."/>
            <person name="Rose D.J."/>
            <person name="Burland V."/>
            <person name="Kodoyianni V."/>
            <person name="Schwartz D.C."/>
            <person name="Blattner F.R."/>
        </authorList>
    </citation>
    <scope>NUCLEOTIDE SEQUENCE [LARGE SCALE GENOMIC DNA]</scope>
    <source>
        <strain>ATCC 700931 / Ty2</strain>
    </source>
</reference>
<comment type="function">
    <text evidence="2">Involved in the biosynthesis of the central metabolite phospho-alpha-D-ribosyl-1-pyrophosphate (PRPP) via the transfer of pyrophosphoryl group from ATP to 1-hydroxyl of ribose-5-phosphate (Rib-5-P).</text>
</comment>
<comment type="catalytic activity">
    <reaction evidence="2">
        <text>D-ribose 5-phosphate + ATP = 5-phospho-alpha-D-ribose 1-diphosphate + AMP + H(+)</text>
        <dbReference type="Rhea" id="RHEA:15609"/>
        <dbReference type="ChEBI" id="CHEBI:15378"/>
        <dbReference type="ChEBI" id="CHEBI:30616"/>
        <dbReference type="ChEBI" id="CHEBI:58017"/>
        <dbReference type="ChEBI" id="CHEBI:78346"/>
        <dbReference type="ChEBI" id="CHEBI:456215"/>
        <dbReference type="EC" id="2.7.6.1"/>
    </reaction>
</comment>
<comment type="cofactor">
    <cofactor evidence="2">
        <name>Mg(2+)</name>
        <dbReference type="ChEBI" id="CHEBI:18420"/>
    </cofactor>
    <text evidence="2">Binds 2 Mg(2+) ions per subunit.</text>
</comment>
<comment type="pathway">
    <text evidence="2">Metabolic intermediate biosynthesis; 5-phospho-alpha-D-ribose 1-diphosphate biosynthesis; 5-phospho-alpha-D-ribose 1-diphosphate from D-ribose 5-phosphate (route I): step 1/1.</text>
</comment>
<comment type="subunit">
    <text evidence="2">Homohexamer.</text>
</comment>
<comment type="subcellular location">
    <subcellularLocation>
        <location evidence="2">Cytoplasm</location>
    </subcellularLocation>
</comment>
<comment type="similarity">
    <text evidence="2">Belongs to the ribose-phosphate pyrophosphokinase family. Class I subfamily.</text>
</comment>
<keyword id="KW-0067">ATP-binding</keyword>
<keyword id="KW-0963">Cytoplasm</keyword>
<keyword id="KW-0418">Kinase</keyword>
<keyword id="KW-0460">Magnesium</keyword>
<keyword id="KW-0479">Metal-binding</keyword>
<keyword id="KW-0545">Nucleotide biosynthesis</keyword>
<keyword id="KW-0547">Nucleotide-binding</keyword>
<keyword id="KW-0808">Transferase</keyword>